<comment type="function">
    <text evidence="2 6">Part of the dynactin complex that activates the molecular motor dynein for ultra-processive transport along microtubules (PubMed:33734450). Plays a key role in dynein-mediated retrograde transport of vesicles and organelles along microtubules by recruiting and tethering dynein to microtubules. Binds to both dynein and microtubules providing a link between specific cargos, microtubules and dynein. Essential for targeting dynein to microtubule plus ends, recruiting dynein to membranous cargos and enhancing dynein processivity (the ability to move along a microtubule for a long distance without falling off the track). Can also act as a brake to slow the dynein motor during motility along the microtubule. Can regulate microtubule stability by promoting microtubule formation, nucleation and polymerization and by inhibiting microtubule catastrophe in neurons. Inhibits microtubule catastrophe by binding both to microtubules and to tubulin, leading to enhanced microtubule stability along the axon. Plays a role in metaphase spindle orientation. Plays a role in centriole cohesion and subdistal appendage organization and function. Its recruitment to the centriole in a KIF3A-dependent manner is essential for the maintenance of centriole cohesion and the formation of subdistal appendage. Also required for microtubule anchoring at the mother centriole. Plays a role in primary cilia formation (By similarity).</text>
</comment>
<comment type="subunit">
    <text evidence="1 2 6 7">Monomer and homodimer (PubMed:33734450). Subunit of dynactin, a multiprotein complex part of a tripartite complex with dynein and a adapter, such as BICDL1, BICD2 or HOOK3 (PubMed:33734450). The dynactin complex is built around ACTR1A/ACTB filament and consists of an actin-related filament composed of a shoulder domain, a pointed end and a barbed end. Its length is defined by its flexible shoulder domain. The soulder is composed of 2 DCTN1 subunits, 4 DCTN2 and 2 DCTN3. DCTN1/p150(glued) binds directly to microtubules and to cytoplasmic dynein. The 4 DCNT2 (via N-terminus) bind the ACTR1A filament and act as molecular rulers to determine the length. The pointed end is important for binding dynein-dynactin cargo adapters. Consists of 4 subunits: ACTR10, DCNT4, DCTN5 and DCTN6 (PubMed:33734450). The barbed end is composed of a CAPZA1:CAPZB heterodimers, which binds ACTR1A/ACTB filament and dynactin and stabilizes dynactin (PubMed:33734450, PubMed:36071160). Interacts with the C-terminus of MAPRE1, MAPRE2 and MAPRE3. Interacts (via C-terminus) with SNX6. Interacts with CLN3, DYNAP, ECPAS and FBXL5. Interacts with MISP; this interaction regulates its distribution at the cell cortex. Interacts with CEP131. Interacts with CEP126. Interacts with CLIP1. Interacts with dynein intermediate chain and dynein heavy chain. Interacts with PLK1 (via POLO-box domain). Interacts with TBCB. Binds preferentially to tyrosinated microtubules than to detyrosinated microtubules. Interacts with PARD6A. Interacts with HPS6 (By similarity). Interacts with KIF3A. Interacts with BICD2 (By similarity). Interacts with DST (isoform 9) (By similarity). Interacts with DST (isoform 1) (By similarity). Identified in a complex with MREG and RILP (By similarity). Interacts with BCCIP (isoform 2/alpha). Interacts with DCDC1 (By similarity). Interacts with AKNA (By similarity). Interacts with DYNC1I2 (By similarity). Interacts with RUFY3 and RUFY4 (By similarity).</text>
</comment>
<comment type="subcellular location">
    <subcellularLocation>
        <location evidence="2">Cytoplasm</location>
    </subcellularLocation>
    <subcellularLocation>
        <location evidence="2">Cytoplasm</location>
        <location evidence="2">Cytoskeleton</location>
    </subcellularLocation>
    <subcellularLocation>
        <location evidence="2">Cytoplasm</location>
        <location evidence="2">Cytoskeleton</location>
        <location evidence="2">Microtubule organizing center</location>
        <location evidence="2">Centrosome</location>
    </subcellularLocation>
    <subcellularLocation>
        <location evidence="2">Cytoplasm</location>
        <location evidence="2">Cytoskeleton</location>
        <location evidence="2">Microtubule organizing center</location>
        <location evidence="2">Centrosome</location>
        <location evidence="2">Centriole</location>
    </subcellularLocation>
    <subcellularLocation>
        <location evidence="2">Cytoplasm</location>
        <location evidence="2">Cytoskeleton</location>
        <location evidence="2">Spindle</location>
    </subcellularLocation>
    <subcellularLocation>
        <location evidence="2">Nucleus envelope</location>
    </subcellularLocation>
    <subcellularLocation>
        <location evidence="2">Cytoplasm</location>
        <location evidence="2">Cell cortex</location>
    </subcellularLocation>
    <text evidence="2">Localizes to microtubule plus ends. Localizes preferentially to the ends of tyrosinated microtubules. Localization at centrosome is regulated by SLK-dependent phosphorylation. Localizes to centrosome in a PARKDA-dependent manner. Localizes to the subdistal appendage region of the centriole in a KIF3A-dependent manner. PLK1-mediated phosphorylation at Ser-179 is essential for its localization in the nuclear envelope.</text>
</comment>
<comment type="domain">
    <text evidence="2">The CAP-Gly domain is essential for interactions with microtubules and its binding partners and for its motion along the microtubules. Essential for its preferential binding to tyrosinated microtubules and for promoting the sustained interaction of the dynein motor with microtubules.</text>
</comment>
<comment type="PTM">
    <text evidence="2">Ubiquitinated by a SCF complex containing FBXL5, leading to its degradation by the proteasome.</text>
</comment>
<comment type="PTM">
    <text evidence="2">Phosphorylation by SLK at Thr-145, Thr-146 and Thr-147 targets DCTN1 to the centrosome. It is uncertain if SLK phosphorylates all three threonines or one or two of them. PLK1-mediated phosphorylation at Ser-179 is essential for its localization in the nuclear envelope, promotes its dissociation from microtubules during early mitosis and positively regulates nuclear envelope breakdown during prophase.</text>
</comment>
<comment type="similarity">
    <text evidence="8">Belongs to the dynactin 150 kDa subunit family.</text>
</comment>
<evidence type="ECO:0000250" key="1">
    <source>
        <dbReference type="UniProtKB" id="O08788"/>
    </source>
</evidence>
<evidence type="ECO:0000250" key="2">
    <source>
        <dbReference type="UniProtKB" id="Q14203"/>
    </source>
</evidence>
<evidence type="ECO:0000255" key="3"/>
<evidence type="ECO:0000255" key="4">
    <source>
        <dbReference type="PROSITE-ProRule" id="PRU00045"/>
    </source>
</evidence>
<evidence type="ECO:0000256" key="5">
    <source>
        <dbReference type="SAM" id="MobiDB-lite"/>
    </source>
</evidence>
<evidence type="ECO:0000269" key="6">
    <source>
    </source>
</evidence>
<evidence type="ECO:0000269" key="7">
    <source>
    </source>
</evidence>
<evidence type="ECO:0000305" key="8"/>
<evidence type="ECO:0000312" key="9">
    <source>
        <dbReference type="Proteomes" id="UP000008227"/>
    </source>
</evidence>
<evidence type="ECO:0007744" key="10">
    <source>
        <dbReference type="PDB" id="6ZNL"/>
    </source>
</evidence>
<evidence type="ECO:0007744" key="11">
    <source>
        <dbReference type="PDB" id="7Z8F"/>
    </source>
</evidence>
<accession>A0A287B8J2</accession>
<accession>A0A8D1D718</accession>
<protein>
    <recommendedName>
        <fullName evidence="8">Dynactin subunit 1</fullName>
    </recommendedName>
    <alternativeName>
        <fullName>150 kDa dynein-associated polypeptide</fullName>
    </alternativeName>
    <alternativeName>
        <fullName>p150-glued</fullName>
    </alternativeName>
</protein>
<sequence>MAQSKRHVYSRTPSGSRMSAEASARPLRVGSRVEVIGKGHRGTVAYVGATLFATGKWVGVILDEAKGKNDGTVQGRKYFTCDEGHGIFVRQSQIQVFEDGADTTSPETPDSSASKVLRREGTDSNAKTSKLRGPKPKKAPTARKTTTRRPKPTRPASTGVAGASSSLGPSGSASAGELSSSEPSTPAQTPLAAPIIPTPALTSPGAAPPLPSPSKEEEGLRAQVRDLEEKLETLRLKRAEDKAKLKELEKHKIQLEQVQEWKSKMQEQQADLQRRLKEARKEAKEALEAKERYMEEMADTADAIEMATLDKEMAEERAESLQQEVEALKERVDELTTDLEILKAEIEEKGSDGAASSYQLKQLEEQNARLKDALVRMRDLSSSEKQEHVKLQKLMEKKNQELEVVRQQRERLQEELSQAESTIDELKEQVDAALGAEEMVEMLTDRNLNLEEKVRELRETVGDLEAMNEMNDELQENARETELELREQLDMAGARVREAQKRVEAAQETVADYQQTIKKYRQLTAHLQDVNRELTNQQEASVERQQQPPPETFDFKIKFAETKAHAKAIEMELRQMEVAQANRHMSLLTAFMPDSFLRPGGDHDCVLVLLLMPRLICKAELIRKQAQEKFDLSENCSERPGLRGAAGEQLSFAAGLVYSLSLLQATLHRYEHALSQCSVDVYKKVGSLYPEMSAHERSLDFLIELLHKDQLDETVNVEPLTKAIKYYQHLYSIHLAEQPEDSTMQLADHIKFTQSALDCMSVEVGRLRAFLQGGQEASDIALLLRDLETSCSDIRQFCKKIRRRMPGTDAPGIPAALAFGAQVSDTLLDCRKHLTWVVAVLQEVAAAAAQLIAPLAENEGLPVAALEELAFKASEQIYGTPSSSPYECLRQSCNILISTMNKLATAMQEGEYDAERPPSKPPPVELRAAALRAEITDAEGLGLKLEDRETVIKELKKSLKIKGEELSEANVRLSLLEKKLDSAAKDADERIEKVQTRLEETQALLRKKEKEFEETMDALQADIDQLEAEKAELKQRLNSQSKRTIEGIRGPPPSGIATLVSGIAGEEQQRGGAPGQAPGIVPGPGLVKDSPLLLQQISAMRLHISQLQHENSVLKGAQMKASLAALPPLHVAKLSLPPHEGPGSELAAGALYRKTNQLLETLNQLSTHTHVVDITRSSPAAKSPSAQLLEQVTQLKSLSDTIEKLKDEVLKETVSQRPGATVPTDFATFPSSAFLRAKEEQQDDTVYMGKVTFSCAAGLGQRHRLVLTQEQLHQLHDRLIS</sequence>
<organism evidence="9">
    <name type="scientific">Sus scrofa</name>
    <name type="common">Pig</name>
    <dbReference type="NCBI Taxonomy" id="9823"/>
    <lineage>
        <taxon>Eukaryota</taxon>
        <taxon>Metazoa</taxon>
        <taxon>Chordata</taxon>
        <taxon>Craniata</taxon>
        <taxon>Vertebrata</taxon>
        <taxon>Euteleostomi</taxon>
        <taxon>Mammalia</taxon>
        <taxon>Eutheria</taxon>
        <taxon>Laurasiatheria</taxon>
        <taxon>Artiodactyla</taxon>
        <taxon>Suina</taxon>
        <taxon>Suidae</taxon>
        <taxon>Sus</taxon>
    </lineage>
</organism>
<keyword id="KW-0002">3D-structure</keyword>
<keyword id="KW-0131">Cell cycle</keyword>
<keyword id="KW-0132">Cell division</keyword>
<keyword id="KW-0175">Coiled coil</keyword>
<keyword id="KW-0963">Cytoplasm</keyword>
<keyword id="KW-0206">Cytoskeleton</keyword>
<keyword id="KW-0243">Dynein</keyword>
<keyword id="KW-0493">Microtubule</keyword>
<keyword id="KW-0498">Mitosis</keyword>
<keyword id="KW-0539">Nucleus</keyword>
<keyword id="KW-0597">Phosphoprotein</keyword>
<keyword id="KW-1185">Reference proteome</keyword>
<keyword id="KW-0813">Transport</keyword>
<keyword id="KW-0832">Ubl conjugation</keyword>
<feature type="chain" id="PRO_0000457461" description="Dynactin subunit 1">
    <location>
        <begin position="1"/>
        <end position="1281"/>
    </location>
</feature>
<feature type="domain" description="CAP-Gly" evidence="4">
    <location>
        <begin position="48"/>
        <end position="90"/>
    </location>
</feature>
<feature type="region of interest" description="Disordered" evidence="5">
    <location>
        <begin position="1"/>
        <end position="25"/>
    </location>
</feature>
<feature type="region of interest" description="Disordered" evidence="5">
    <location>
        <begin position="99"/>
        <end position="225"/>
    </location>
</feature>
<feature type="region of interest" description="Interaction with HPS6" evidence="2">
    <location>
        <begin position="911"/>
        <end position="1281"/>
    </location>
</feature>
<feature type="region of interest" description="Disordered" evidence="5">
    <location>
        <begin position="1065"/>
        <end position="1084"/>
    </location>
</feature>
<feature type="coiled-coil region" evidence="3">
    <location>
        <begin position="217"/>
        <end position="540"/>
    </location>
</feature>
<feature type="coiled-coil region" evidence="3">
    <location>
        <begin position="952"/>
        <end position="1043"/>
    </location>
</feature>
<feature type="compositionally biased region" description="Polar residues" evidence="5">
    <location>
        <begin position="102"/>
        <end position="114"/>
    </location>
</feature>
<feature type="compositionally biased region" description="Basic residues" evidence="5">
    <location>
        <begin position="129"/>
        <end position="152"/>
    </location>
</feature>
<feature type="compositionally biased region" description="Low complexity" evidence="5">
    <location>
        <begin position="161"/>
        <end position="205"/>
    </location>
</feature>
<feature type="compositionally biased region" description="Basic and acidic residues" evidence="5">
    <location>
        <begin position="214"/>
        <end position="225"/>
    </location>
</feature>
<feature type="modified residue" description="Phosphothreonine" evidence="2">
    <location>
        <position position="108"/>
    </location>
</feature>
<feature type="modified residue" description="Phosphothreonine" evidence="2">
    <location>
        <position position="145"/>
    </location>
</feature>
<feature type="modified residue" description="Phosphothreonine" evidence="2">
    <location>
        <position position="146"/>
    </location>
</feature>
<feature type="modified residue" description="Phosphothreonine" evidence="2">
    <location>
        <position position="147"/>
    </location>
</feature>
<feature type="modified residue" description="Phosphoserine" evidence="2">
    <location>
        <position position="179"/>
    </location>
</feature>
<feature type="modified residue" description="Phosphoserine" evidence="2">
    <location>
        <position position="212"/>
    </location>
</feature>
<dbReference type="RefSeq" id="XP_020943008.1">
    <property type="nucleotide sequence ID" value="XM_021087349.1"/>
</dbReference>
<dbReference type="PDB" id="6ZNL">
    <property type="method" value="EM"/>
    <property type="resolution" value="3.80 A"/>
    <property type="chains" value="Z/z=1-1281"/>
</dbReference>
<dbReference type="PDB" id="7Z8F">
    <property type="method" value="EM"/>
    <property type="resolution" value="20.00 A"/>
    <property type="chains" value="S/T=1-1281"/>
</dbReference>
<dbReference type="PDB" id="8PQW">
    <property type="method" value="EM"/>
    <property type="resolution" value="4.20 A"/>
    <property type="chains" value="F/G=1-1281"/>
</dbReference>
<dbReference type="PDB" id="8PQZ">
    <property type="method" value="EM"/>
    <property type="resolution" value="5.50 A"/>
    <property type="chains" value="F/G=1-1281"/>
</dbReference>
<dbReference type="PDB" id="8PR0">
    <property type="method" value="EM"/>
    <property type="resolution" value="9.40 A"/>
    <property type="chains" value="I/J=1-1281"/>
</dbReference>
<dbReference type="PDB" id="8PR5">
    <property type="method" value="EM"/>
    <property type="resolution" value="8.60 A"/>
    <property type="chains" value="A/B=214-1051"/>
</dbReference>
<dbReference type="PDB" id="8PTK">
    <property type="method" value="EM"/>
    <property type="resolution" value="10.00 A"/>
    <property type="chains" value="S/T=1-1281"/>
</dbReference>
<dbReference type="PDBsum" id="6ZNL"/>
<dbReference type="PDBsum" id="7Z8F"/>
<dbReference type="PDBsum" id="8PQW"/>
<dbReference type="PDBsum" id="8PQZ"/>
<dbReference type="PDBsum" id="8PR0"/>
<dbReference type="PDBsum" id="8PR5"/>
<dbReference type="PDBsum" id="8PTK"/>
<dbReference type="EMDB" id="EMD-11313"/>
<dbReference type="EMDB" id="EMD-14549"/>
<dbReference type="EMDB" id="EMD-17826"/>
<dbReference type="EMDB" id="EMD-17829"/>
<dbReference type="EMDB" id="EMD-17830"/>
<dbReference type="EMDB" id="EMD-17873"/>
<dbReference type="SMR" id="A0A287B8J2"/>
<dbReference type="FunCoup" id="A0A287B8J2">
    <property type="interactions" value="2226"/>
</dbReference>
<dbReference type="STRING" id="9823.ENSSSCP00000052846"/>
<dbReference type="GlyGen" id="A0A287B8J2">
    <property type="glycosylation" value="2 sites"/>
</dbReference>
<dbReference type="PaxDb" id="9823-ENSSSCP00000008833"/>
<dbReference type="Ensembl" id="ENSSSCT00000042888.3">
    <property type="protein sequence ID" value="ENSSSCP00000052846.2"/>
    <property type="gene ID" value="ENSSSCG00000008274.5"/>
</dbReference>
<dbReference type="Ensembl" id="ENSSSCT00035111401.1">
    <property type="protein sequence ID" value="ENSSSCP00035048805.1"/>
    <property type="gene ID" value="ENSSSCG00035081068.1"/>
</dbReference>
<dbReference type="Ensembl" id="ENSSSCT00040077289.1">
    <property type="protein sequence ID" value="ENSSSCP00040033218.1"/>
    <property type="gene ID" value="ENSSSCG00040056241.1"/>
</dbReference>
<dbReference type="Ensembl" id="ENSSSCT00045066163.1">
    <property type="protein sequence ID" value="ENSSSCP00045046885.1"/>
    <property type="gene ID" value="ENSSSCG00045038032.1"/>
</dbReference>
<dbReference type="Ensembl" id="ENSSSCT00055043366.1">
    <property type="protein sequence ID" value="ENSSSCP00055034507.1"/>
    <property type="gene ID" value="ENSSSCG00055016137.1"/>
</dbReference>
<dbReference type="Ensembl" id="ENSSSCT00065066525.1">
    <property type="protein sequence ID" value="ENSSSCP00065028833.1"/>
    <property type="gene ID" value="ENSSSCG00065047644.1"/>
</dbReference>
<dbReference type="Ensembl" id="ENSSSCT00115016878">
    <property type="protein sequence ID" value="ENSSSCP00115015934"/>
    <property type="gene ID" value="ENSSSCG00115006866"/>
</dbReference>
<dbReference type="GeneID" id="100519249"/>
<dbReference type="VGNC" id="VGNC:101486">
    <property type="gene designation" value="DCTN1"/>
</dbReference>
<dbReference type="GeneTree" id="ENSGT00940000155378"/>
<dbReference type="InParanoid" id="A0A287B8J2"/>
<dbReference type="OrthoDB" id="2130750at2759"/>
<dbReference type="Reactome" id="R-SSC-2132295">
    <property type="pathway name" value="MHC class II antigen presentation"/>
</dbReference>
<dbReference type="Reactome" id="R-SSC-2565942">
    <property type="pathway name" value="Regulation of PLK1 Activity at G2/M Transition"/>
</dbReference>
<dbReference type="Reactome" id="R-SSC-3371497">
    <property type="pathway name" value="HSP90 chaperone cycle for steroid hormone receptors (SHR) in the presence of ligand"/>
</dbReference>
<dbReference type="Reactome" id="R-SSC-380259">
    <property type="pathway name" value="Loss of Nlp from mitotic centrosomes"/>
</dbReference>
<dbReference type="Reactome" id="R-SSC-380270">
    <property type="pathway name" value="Recruitment of mitotic centrosome proteins and complexes"/>
</dbReference>
<dbReference type="Reactome" id="R-SSC-380284">
    <property type="pathway name" value="Loss of proteins required for interphase microtubule organization from the centrosome"/>
</dbReference>
<dbReference type="Reactome" id="R-SSC-380320">
    <property type="pathway name" value="Recruitment of NuMA to mitotic centrosomes"/>
</dbReference>
<dbReference type="Reactome" id="R-SSC-5620912">
    <property type="pathway name" value="Anchoring of the basal body to the plasma membrane"/>
</dbReference>
<dbReference type="Reactome" id="R-SSC-6807878">
    <property type="pathway name" value="COPI-mediated anterograde transport"/>
</dbReference>
<dbReference type="Reactome" id="R-SSC-8854518">
    <property type="pathway name" value="AURKA Activation by TPX2"/>
</dbReference>
<dbReference type="Proteomes" id="UP000008227">
    <property type="component" value="Chromosome 3"/>
</dbReference>
<dbReference type="Proteomes" id="UP000314985">
    <property type="component" value="Unplaced"/>
</dbReference>
<dbReference type="Proteomes" id="UP000694570">
    <property type="component" value="Unplaced"/>
</dbReference>
<dbReference type="Proteomes" id="UP000694571">
    <property type="component" value="Unplaced"/>
</dbReference>
<dbReference type="Proteomes" id="UP000694720">
    <property type="component" value="Unplaced"/>
</dbReference>
<dbReference type="Proteomes" id="UP000694722">
    <property type="component" value="Unplaced"/>
</dbReference>
<dbReference type="Proteomes" id="UP000694723">
    <property type="component" value="Unplaced"/>
</dbReference>
<dbReference type="Proteomes" id="UP000694724">
    <property type="component" value="Unplaced"/>
</dbReference>
<dbReference type="Proteomes" id="UP000694725">
    <property type="component" value="Unplaced"/>
</dbReference>
<dbReference type="Proteomes" id="UP000694726">
    <property type="component" value="Unplaced"/>
</dbReference>
<dbReference type="Proteomes" id="UP000694727">
    <property type="component" value="Unplaced"/>
</dbReference>
<dbReference type="Proteomes" id="UP000694728">
    <property type="component" value="Unplaced"/>
</dbReference>
<dbReference type="Bgee" id="ENSSSCG00000008274">
    <property type="expression patterns" value="Expressed in hypothalamus and 43 other cell types or tissues"/>
</dbReference>
<dbReference type="ExpressionAtlas" id="A0A287B8J2">
    <property type="expression patterns" value="baseline and differential"/>
</dbReference>
<dbReference type="GO" id="GO:0030424">
    <property type="term" value="C:axon"/>
    <property type="evidence" value="ECO:0000318"/>
    <property type="project" value="GO_Central"/>
</dbReference>
<dbReference type="GO" id="GO:0005938">
    <property type="term" value="C:cell cortex"/>
    <property type="evidence" value="ECO:0007669"/>
    <property type="project" value="UniProtKB-SubCell"/>
</dbReference>
<dbReference type="GO" id="GO:0031252">
    <property type="term" value="C:cell leading edge"/>
    <property type="evidence" value="ECO:0007669"/>
    <property type="project" value="Ensembl"/>
</dbReference>
<dbReference type="GO" id="GO:0120103">
    <property type="term" value="C:centriolar subdistal appendage"/>
    <property type="evidence" value="ECO:0007669"/>
    <property type="project" value="Ensembl"/>
</dbReference>
<dbReference type="GO" id="GO:0005814">
    <property type="term" value="C:centriole"/>
    <property type="evidence" value="ECO:0007669"/>
    <property type="project" value="UniProtKB-SubCell"/>
</dbReference>
<dbReference type="GO" id="GO:0005813">
    <property type="term" value="C:centrosome"/>
    <property type="evidence" value="ECO:0007669"/>
    <property type="project" value="UniProtKB-SubCell"/>
</dbReference>
<dbReference type="GO" id="GO:0036064">
    <property type="term" value="C:ciliary basal body"/>
    <property type="evidence" value="ECO:0007669"/>
    <property type="project" value="Ensembl"/>
</dbReference>
<dbReference type="GO" id="GO:0005829">
    <property type="term" value="C:cytosol"/>
    <property type="evidence" value="ECO:0007669"/>
    <property type="project" value="Ensembl"/>
</dbReference>
<dbReference type="GO" id="GO:0030286">
    <property type="term" value="C:dynein complex"/>
    <property type="evidence" value="ECO:0007669"/>
    <property type="project" value="UniProtKB-KW"/>
</dbReference>
<dbReference type="GO" id="GO:0045171">
    <property type="term" value="C:intercellular bridge"/>
    <property type="evidence" value="ECO:0007669"/>
    <property type="project" value="Ensembl"/>
</dbReference>
<dbReference type="GO" id="GO:0000776">
    <property type="term" value="C:kinetochore"/>
    <property type="evidence" value="ECO:0000318"/>
    <property type="project" value="GO_Central"/>
</dbReference>
<dbReference type="GO" id="GO:0005875">
    <property type="term" value="C:microtubule associated complex"/>
    <property type="evidence" value="ECO:0000318"/>
    <property type="project" value="GO_Central"/>
</dbReference>
<dbReference type="GO" id="GO:0035371">
    <property type="term" value="C:microtubule plus-end"/>
    <property type="evidence" value="ECO:0007669"/>
    <property type="project" value="Ensembl"/>
</dbReference>
<dbReference type="GO" id="GO:0072686">
    <property type="term" value="C:mitotic spindle"/>
    <property type="evidence" value="ECO:0007669"/>
    <property type="project" value="Ensembl"/>
</dbReference>
<dbReference type="GO" id="GO:0043025">
    <property type="term" value="C:neuronal cell body"/>
    <property type="evidence" value="ECO:0007669"/>
    <property type="project" value="Ensembl"/>
</dbReference>
<dbReference type="GO" id="GO:0005635">
    <property type="term" value="C:nuclear envelope"/>
    <property type="evidence" value="ECO:0007669"/>
    <property type="project" value="UniProtKB-SubCell"/>
</dbReference>
<dbReference type="GO" id="GO:0030904">
    <property type="term" value="C:retromer complex"/>
    <property type="evidence" value="ECO:0007669"/>
    <property type="project" value="Ensembl"/>
</dbReference>
<dbReference type="GO" id="GO:0000922">
    <property type="term" value="C:spindle pole"/>
    <property type="evidence" value="ECO:0000318"/>
    <property type="project" value="GO_Central"/>
</dbReference>
<dbReference type="GO" id="GO:0008017">
    <property type="term" value="F:microtubule binding"/>
    <property type="evidence" value="ECO:0007669"/>
    <property type="project" value="Ensembl"/>
</dbReference>
<dbReference type="GO" id="GO:0019901">
    <property type="term" value="F:protein kinase binding"/>
    <property type="evidence" value="ECO:0007669"/>
    <property type="project" value="Ensembl"/>
</dbReference>
<dbReference type="GO" id="GO:0051301">
    <property type="term" value="P:cell division"/>
    <property type="evidence" value="ECO:0007669"/>
    <property type="project" value="UniProtKB-KW"/>
</dbReference>
<dbReference type="GO" id="GO:0010457">
    <property type="term" value="P:centriole-centriole cohesion"/>
    <property type="evidence" value="ECO:0007669"/>
    <property type="project" value="Ensembl"/>
</dbReference>
<dbReference type="GO" id="GO:0000132">
    <property type="term" value="P:establishment of mitotic spindle orientation"/>
    <property type="evidence" value="ECO:0000318"/>
    <property type="project" value="GO_Central"/>
</dbReference>
<dbReference type="GO" id="GO:0032402">
    <property type="term" value="P:melanosome transport"/>
    <property type="evidence" value="ECO:0007669"/>
    <property type="project" value="Ensembl"/>
</dbReference>
<dbReference type="GO" id="GO:0034454">
    <property type="term" value="P:microtubule anchoring at centrosome"/>
    <property type="evidence" value="ECO:0007669"/>
    <property type="project" value="Ensembl"/>
</dbReference>
<dbReference type="GO" id="GO:0061744">
    <property type="term" value="P:motor behavior"/>
    <property type="evidence" value="ECO:0007669"/>
    <property type="project" value="Ensembl"/>
</dbReference>
<dbReference type="GO" id="GO:0007528">
    <property type="term" value="P:neuromuscular junction development"/>
    <property type="evidence" value="ECO:0007669"/>
    <property type="project" value="Ensembl"/>
</dbReference>
<dbReference type="GO" id="GO:0050905">
    <property type="term" value="P:neuromuscular process"/>
    <property type="evidence" value="ECO:0007669"/>
    <property type="project" value="Ensembl"/>
</dbReference>
<dbReference type="GO" id="GO:0070050">
    <property type="term" value="P:neuron cellular homeostasis"/>
    <property type="evidence" value="ECO:0007669"/>
    <property type="project" value="Ensembl"/>
</dbReference>
<dbReference type="GO" id="GO:1990535">
    <property type="term" value="P:neuron projection maintenance"/>
    <property type="evidence" value="ECO:0007669"/>
    <property type="project" value="Ensembl"/>
</dbReference>
<dbReference type="GO" id="GO:1905515">
    <property type="term" value="P:non-motile cilium assembly"/>
    <property type="evidence" value="ECO:0007669"/>
    <property type="project" value="Ensembl"/>
</dbReference>
<dbReference type="GO" id="GO:0051081">
    <property type="term" value="P:nuclear membrane disassembly"/>
    <property type="evidence" value="ECO:0007669"/>
    <property type="project" value="Ensembl"/>
</dbReference>
<dbReference type="GO" id="GO:0007097">
    <property type="term" value="P:nuclear migration"/>
    <property type="evidence" value="ECO:0000318"/>
    <property type="project" value="GO_Central"/>
</dbReference>
<dbReference type="GO" id="GO:0090063">
    <property type="term" value="P:positive regulation of microtubule nucleation"/>
    <property type="evidence" value="ECO:0007669"/>
    <property type="project" value="Ensembl"/>
</dbReference>
<dbReference type="GO" id="GO:1904398">
    <property type="term" value="P:positive regulation of neuromuscular junction development"/>
    <property type="evidence" value="ECO:0007669"/>
    <property type="project" value="Ensembl"/>
</dbReference>
<dbReference type="GO" id="GO:0060236">
    <property type="term" value="P:regulation of mitotic spindle organization"/>
    <property type="evidence" value="ECO:0007669"/>
    <property type="project" value="Ensembl"/>
</dbReference>
<dbReference type="GO" id="GO:0042147">
    <property type="term" value="P:retrograde transport, endosome to Golgi"/>
    <property type="evidence" value="ECO:0007669"/>
    <property type="project" value="Ensembl"/>
</dbReference>
<dbReference type="GO" id="GO:0021517">
    <property type="term" value="P:ventral spinal cord development"/>
    <property type="evidence" value="ECO:0007669"/>
    <property type="project" value="Ensembl"/>
</dbReference>
<dbReference type="FunFam" id="2.30.30.190:FF:000003">
    <property type="entry name" value="dynactin subunit 1 isoform X1"/>
    <property type="match status" value="1"/>
</dbReference>
<dbReference type="Gene3D" id="1.10.287.2610">
    <property type="match status" value="1"/>
</dbReference>
<dbReference type="Gene3D" id="2.30.30.190">
    <property type="entry name" value="CAP Gly-rich-like domain"/>
    <property type="match status" value="1"/>
</dbReference>
<dbReference type="InterPro" id="IPR036859">
    <property type="entry name" value="CAP-Gly_dom_sf"/>
</dbReference>
<dbReference type="InterPro" id="IPR000938">
    <property type="entry name" value="CAP-Gly_domain"/>
</dbReference>
<dbReference type="InterPro" id="IPR022157">
    <property type="entry name" value="Dynactin"/>
</dbReference>
<dbReference type="PANTHER" id="PTHR18916">
    <property type="entry name" value="DYNACTIN 1-RELATED MICROTUBULE-BINDING"/>
    <property type="match status" value="1"/>
</dbReference>
<dbReference type="Pfam" id="PF01302">
    <property type="entry name" value="CAP_GLY"/>
    <property type="match status" value="1"/>
</dbReference>
<dbReference type="Pfam" id="PF12455">
    <property type="entry name" value="Dynactin"/>
    <property type="match status" value="1"/>
</dbReference>
<dbReference type="SMART" id="SM01052">
    <property type="entry name" value="CAP_GLY"/>
    <property type="match status" value="1"/>
</dbReference>
<dbReference type="SUPFAM" id="SSF74924">
    <property type="entry name" value="Cap-Gly domain"/>
    <property type="match status" value="1"/>
</dbReference>
<dbReference type="PROSITE" id="PS00845">
    <property type="entry name" value="CAP_GLY_1"/>
    <property type="match status" value="1"/>
</dbReference>
<dbReference type="PROSITE" id="PS50245">
    <property type="entry name" value="CAP_GLY_2"/>
    <property type="match status" value="1"/>
</dbReference>
<proteinExistence type="evidence at protein level"/>
<name>DCTN1_PIG</name>
<gene>
    <name type="primary">DCTN1</name>
</gene>
<reference evidence="10" key="1">
    <citation type="journal article" date="2021" name="EMBO J.">
        <title>Cryo-EM reveals the complex architecture of dynactin's shoulder region and pointed end.</title>
        <authorList>
            <person name="Lau C.K."/>
            <person name="O'Reilly F.J."/>
            <person name="Santhanam B."/>
            <person name="Lacey S.E."/>
            <person name="Rappsilber J."/>
            <person name="Carter A.P."/>
        </authorList>
    </citation>
    <scope>STRUCTURE BY ELECTRON MICROSCOPY (3.80 ANGSTROMS)</scope>
    <scope>SUBUNIT</scope>
    <scope>FUNCTION</scope>
</reference>
<reference evidence="11" key="2">
    <citation type="journal article" date="2022" name="Nature">
        <title>Structure of dynein-dynactin on microtubules shows tandem adaptor binding.</title>
        <authorList>
            <person name="Chaaban S."/>
            <person name="Carter A.P."/>
        </authorList>
    </citation>
    <scope>STRUCTURE BY ELECTRON MICROSCOPY (20.00 ANGSTROMS)</scope>
    <scope>SUBUNIT</scope>
    <scope>FUNCTION</scope>
</reference>